<organism>
    <name type="scientific">Staphylococcus epidermidis (strain ATCC 12228 / FDA PCI 1200)</name>
    <dbReference type="NCBI Taxonomy" id="176280"/>
    <lineage>
        <taxon>Bacteria</taxon>
        <taxon>Bacillati</taxon>
        <taxon>Bacillota</taxon>
        <taxon>Bacilli</taxon>
        <taxon>Bacillales</taxon>
        <taxon>Staphylococcaceae</taxon>
        <taxon>Staphylococcus</taxon>
    </lineage>
</organism>
<comment type="function">
    <text evidence="1">Releases the supercoiling and torsional tension of DNA, which is introduced during the DNA replication and transcription, by transiently cleaving and rejoining one strand of the DNA duplex. Introduces a single-strand break via transesterification at a target site in duplex DNA. The scissile phosphodiester is attacked by the catalytic tyrosine of the enzyme, resulting in the formation of a DNA-(5'-phosphotyrosyl)-enzyme intermediate and the expulsion of a 3'-OH DNA strand. The free DNA strand then undergoes passage around the unbroken strand, thus removing DNA supercoils. Finally, in the religation step, the DNA 3'-OH attacks the covalent intermediate to expel the active-site tyrosine and restore the DNA phosphodiester backbone.</text>
</comment>
<comment type="catalytic activity">
    <reaction evidence="1">
        <text>ATP-independent breakage of single-stranded DNA, followed by passage and rejoining.</text>
        <dbReference type="EC" id="5.6.2.1"/>
    </reaction>
</comment>
<comment type="cofactor">
    <cofactor evidence="1">
        <name>Mg(2+)</name>
        <dbReference type="ChEBI" id="CHEBI:18420"/>
    </cofactor>
</comment>
<comment type="subunit">
    <text evidence="1">Monomer.</text>
</comment>
<comment type="similarity">
    <text evidence="1">Belongs to the type IA topoisomerase family.</text>
</comment>
<gene>
    <name evidence="1" type="primary">topA</name>
    <name type="ordered locus">SE_0926</name>
</gene>
<keyword id="KW-0238">DNA-binding</keyword>
<keyword id="KW-0413">Isomerase</keyword>
<keyword id="KW-0460">Magnesium</keyword>
<keyword id="KW-0479">Metal-binding</keyword>
<keyword id="KW-0677">Repeat</keyword>
<keyword id="KW-0799">Topoisomerase</keyword>
<keyword id="KW-0862">Zinc</keyword>
<keyword id="KW-0863">Zinc-finger</keyword>
<sequence length="689" mass="79519">MADNLVIVESPAKAKTIEKYLGKRYKVIASMGHVRDLPRSQMGVDTEDNYEPKYITIRGKGPVVKDLKKHAKKAKKIFLASDPDREGEAIAWHLSKILELEDSKENRVVFNEITKDAVKDSFKHPRGIEMDLVDAQQARRILDRLVGYNISPVLWKKVKKGLSAGRVQSVALRLVIDRENEIRNFKPEEYWSIEGEFRYKKSKFTAKFLHYKNKPYKLNNKDDVQRITEALNGDQFEITNVNRKEKTRYPAHPFTTSTLQQEAARKLNFKARKTMMLAQQLYEGIDLKRQGTVGLITYMRTDSTRISTSAKSEAQQYINDKYGEQYVSQRKSSGKQGDQDAHEAIRPTSTMRTPDDMKAFLTRDQHRLYKLIWERFVASQMAPAILDTVALDVTQNDIKFRANGQTIKFKGFMTLYVEAKDDKENDKENKLPQLDKGDKVTATKIEPAQHFTQPPPRYTEARLVKTLEELKIGRPSTYAPTIDTIQKRNYVKLESKRFIPTELGEIVYEQVKEYFPEIIDVEFTVNMETLLDKIAEGDMNWRKVIGDFYNSFKQDVERAESEMEKIEIKDEPAGEDCEVCGSPMVIKMGRYGKFMACSNFPDCRNTKAIVKTIGVTCPKCNEGDVVERKSKKNRIFYGCSRYPECDFISWDKPVGRDCPKCHHYLVNKKKGKSSQVVCSNCDYEEEVQK</sequence>
<dbReference type="EC" id="5.6.2.1" evidence="1"/>
<dbReference type="EMBL" id="AE015929">
    <property type="protein sequence ID" value="AAO04523.1"/>
    <property type="molecule type" value="Genomic_DNA"/>
</dbReference>
<dbReference type="RefSeq" id="NP_764481.1">
    <property type="nucleotide sequence ID" value="NC_004461.1"/>
</dbReference>
<dbReference type="RefSeq" id="WP_001829508.1">
    <property type="nucleotide sequence ID" value="NZ_WBME01000001.1"/>
</dbReference>
<dbReference type="SMR" id="Q8CSU3"/>
<dbReference type="KEGG" id="sep:SE_0926"/>
<dbReference type="PATRIC" id="fig|176280.10.peg.901"/>
<dbReference type="eggNOG" id="COG0550">
    <property type="taxonomic scope" value="Bacteria"/>
</dbReference>
<dbReference type="HOGENOM" id="CLU_002929_4_3_9"/>
<dbReference type="OrthoDB" id="9804262at2"/>
<dbReference type="Proteomes" id="UP000001411">
    <property type="component" value="Chromosome"/>
</dbReference>
<dbReference type="GO" id="GO:0005694">
    <property type="term" value="C:chromosome"/>
    <property type="evidence" value="ECO:0007669"/>
    <property type="project" value="InterPro"/>
</dbReference>
<dbReference type="GO" id="GO:0003677">
    <property type="term" value="F:DNA binding"/>
    <property type="evidence" value="ECO:0007669"/>
    <property type="project" value="UniProtKB-KW"/>
</dbReference>
<dbReference type="GO" id="GO:0003917">
    <property type="term" value="F:DNA topoisomerase type I (single strand cut, ATP-independent) activity"/>
    <property type="evidence" value="ECO:0007669"/>
    <property type="project" value="UniProtKB-UniRule"/>
</dbReference>
<dbReference type="GO" id="GO:0008270">
    <property type="term" value="F:zinc ion binding"/>
    <property type="evidence" value="ECO:0007669"/>
    <property type="project" value="UniProtKB-KW"/>
</dbReference>
<dbReference type="GO" id="GO:0006265">
    <property type="term" value="P:DNA topological change"/>
    <property type="evidence" value="ECO:0007669"/>
    <property type="project" value="UniProtKB-UniRule"/>
</dbReference>
<dbReference type="CDD" id="cd00186">
    <property type="entry name" value="TOP1Ac"/>
    <property type="match status" value="1"/>
</dbReference>
<dbReference type="CDD" id="cd03363">
    <property type="entry name" value="TOPRIM_TopoIA_TopoI"/>
    <property type="match status" value="1"/>
</dbReference>
<dbReference type="Gene3D" id="3.40.50.140">
    <property type="match status" value="1"/>
</dbReference>
<dbReference type="Gene3D" id="3.30.65.10">
    <property type="entry name" value="Bacterial Topoisomerase I, domain 1"/>
    <property type="match status" value="2"/>
</dbReference>
<dbReference type="Gene3D" id="1.10.460.10">
    <property type="entry name" value="Topoisomerase I, domain 2"/>
    <property type="match status" value="1"/>
</dbReference>
<dbReference type="Gene3D" id="2.70.20.10">
    <property type="entry name" value="Topoisomerase I, domain 3"/>
    <property type="match status" value="1"/>
</dbReference>
<dbReference type="Gene3D" id="1.10.290.10">
    <property type="entry name" value="Topoisomerase I, domain 4"/>
    <property type="match status" value="1"/>
</dbReference>
<dbReference type="HAMAP" id="MF_00952">
    <property type="entry name" value="Topoisom_1_prok"/>
    <property type="match status" value="1"/>
</dbReference>
<dbReference type="InterPro" id="IPR000380">
    <property type="entry name" value="Topo_IA"/>
</dbReference>
<dbReference type="InterPro" id="IPR003601">
    <property type="entry name" value="Topo_IA_2"/>
</dbReference>
<dbReference type="InterPro" id="IPR023406">
    <property type="entry name" value="Topo_IA_AS"/>
</dbReference>
<dbReference type="InterPro" id="IPR013497">
    <property type="entry name" value="Topo_IA_cen"/>
</dbReference>
<dbReference type="InterPro" id="IPR013824">
    <property type="entry name" value="Topo_IA_cen_sub1"/>
</dbReference>
<dbReference type="InterPro" id="IPR013825">
    <property type="entry name" value="Topo_IA_cen_sub2"/>
</dbReference>
<dbReference type="InterPro" id="IPR013826">
    <property type="entry name" value="Topo_IA_cen_sub3"/>
</dbReference>
<dbReference type="InterPro" id="IPR023405">
    <property type="entry name" value="Topo_IA_core_domain"/>
</dbReference>
<dbReference type="InterPro" id="IPR003602">
    <property type="entry name" value="Topo_IA_DNA-bd_dom"/>
</dbReference>
<dbReference type="InterPro" id="IPR013498">
    <property type="entry name" value="Topo_IA_Znf"/>
</dbReference>
<dbReference type="InterPro" id="IPR005733">
    <property type="entry name" value="TopoI_bac-type"/>
</dbReference>
<dbReference type="InterPro" id="IPR028612">
    <property type="entry name" value="Topoisom_1_IA"/>
</dbReference>
<dbReference type="InterPro" id="IPR006171">
    <property type="entry name" value="TOPRIM_dom"/>
</dbReference>
<dbReference type="InterPro" id="IPR034149">
    <property type="entry name" value="TOPRIM_TopoI"/>
</dbReference>
<dbReference type="NCBIfam" id="TIGR01051">
    <property type="entry name" value="topA_bact"/>
    <property type="match status" value="1"/>
</dbReference>
<dbReference type="PANTHER" id="PTHR42785:SF1">
    <property type="entry name" value="DNA TOPOISOMERASE"/>
    <property type="match status" value="1"/>
</dbReference>
<dbReference type="PANTHER" id="PTHR42785">
    <property type="entry name" value="DNA TOPOISOMERASE, TYPE IA, CORE"/>
    <property type="match status" value="1"/>
</dbReference>
<dbReference type="Pfam" id="PF01131">
    <property type="entry name" value="Topoisom_bac"/>
    <property type="match status" value="1"/>
</dbReference>
<dbReference type="Pfam" id="PF01751">
    <property type="entry name" value="Toprim"/>
    <property type="match status" value="1"/>
</dbReference>
<dbReference type="Pfam" id="PF01396">
    <property type="entry name" value="Zn_ribbon_Top1"/>
    <property type="match status" value="3"/>
</dbReference>
<dbReference type="PRINTS" id="PR00417">
    <property type="entry name" value="PRTPISMRASEI"/>
</dbReference>
<dbReference type="SMART" id="SM00437">
    <property type="entry name" value="TOP1Ac"/>
    <property type="match status" value="1"/>
</dbReference>
<dbReference type="SMART" id="SM00436">
    <property type="entry name" value="TOP1Bc"/>
    <property type="match status" value="1"/>
</dbReference>
<dbReference type="SMART" id="SM00493">
    <property type="entry name" value="TOPRIM"/>
    <property type="match status" value="1"/>
</dbReference>
<dbReference type="SUPFAM" id="SSF56712">
    <property type="entry name" value="Prokaryotic type I DNA topoisomerase"/>
    <property type="match status" value="1"/>
</dbReference>
<dbReference type="PROSITE" id="PS00396">
    <property type="entry name" value="TOPO_IA_1"/>
    <property type="match status" value="1"/>
</dbReference>
<dbReference type="PROSITE" id="PS52039">
    <property type="entry name" value="TOPO_IA_2"/>
    <property type="match status" value="1"/>
</dbReference>
<dbReference type="PROSITE" id="PS50880">
    <property type="entry name" value="TOPRIM"/>
    <property type="match status" value="1"/>
</dbReference>
<name>TOP1_STAES</name>
<protein>
    <recommendedName>
        <fullName evidence="1">DNA topoisomerase 1</fullName>
        <ecNumber evidence="1">5.6.2.1</ecNumber>
    </recommendedName>
    <alternativeName>
        <fullName evidence="1">DNA topoisomerase I</fullName>
    </alternativeName>
    <alternativeName>
        <fullName>Omega-protein</fullName>
    </alternativeName>
    <alternativeName>
        <fullName>Relaxing enzyme</fullName>
    </alternativeName>
    <alternativeName>
        <fullName>Swivelase</fullName>
    </alternativeName>
    <alternativeName>
        <fullName>Untwisting enzyme</fullName>
    </alternativeName>
</protein>
<accession>Q8CSU3</accession>
<evidence type="ECO:0000255" key="1">
    <source>
        <dbReference type="HAMAP-Rule" id="MF_00952"/>
    </source>
</evidence>
<evidence type="ECO:0000255" key="2">
    <source>
        <dbReference type="PROSITE-ProRule" id="PRU01383"/>
    </source>
</evidence>
<reference key="1">
    <citation type="journal article" date="2003" name="Mol. Microbiol.">
        <title>Genome-based analysis of virulence genes in a non-biofilm-forming Staphylococcus epidermidis strain (ATCC 12228).</title>
        <authorList>
            <person name="Zhang Y.-Q."/>
            <person name="Ren S.-X."/>
            <person name="Li H.-L."/>
            <person name="Wang Y.-X."/>
            <person name="Fu G."/>
            <person name="Yang J."/>
            <person name="Qin Z.-Q."/>
            <person name="Miao Y.-G."/>
            <person name="Wang W.-Y."/>
            <person name="Chen R.-S."/>
            <person name="Shen Y."/>
            <person name="Chen Z."/>
            <person name="Yuan Z.-H."/>
            <person name="Zhao G.-P."/>
            <person name="Qu D."/>
            <person name="Danchin A."/>
            <person name="Wen Y.-M."/>
        </authorList>
    </citation>
    <scope>NUCLEOTIDE SEQUENCE [LARGE SCALE GENOMIC DNA]</scope>
    <source>
        <strain>ATCC 12228 / FDA PCI 1200</strain>
    </source>
</reference>
<proteinExistence type="inferred from homology"/>
<feature type="chain" id="PRO_0000285944" description="DNA topoisomerase 1">
    <location>
        <begin position="1"/>
        <end position="689"/>
    </location>
</feature>
<feature type="domain" description="Toprim" evidence="1">
    <location>
        <begin position="3"/>
        <end position="113"/>
    </location>
</feature>
<feature type="domain" description="Topo IA-type catalytic" evidence="2">
    <location>
        <begin position="129"/>
        <end position="557"/>
    </location>
</feature>
<feature type="zinc finger region" description="C4-type 1">
    <location>
        <begin position="577"/>
        <end position="603"/>
    </location>
</feature>
<feature type="zinc finger region" description="C4-type 2">
    <location>
        <begin position="617"/>
        <end position="645"/>
    </location>
</feature>
<feature type="zinc finger region" description="C4-type 3">
    <location>
        <begin position="658"/>
        <end position="681"/>
    </location>
</feature>
<feature type="region of interest" description="Interaction with DNA" evidence="1">
    <location>
        <begin position="163"/>
        <end position="168"/>
    </location>
</feature>
<feature type="active site" description="O-(5'-phospho-DNA)-tyrosine intermediate" evidence="2">
    <location>
        <position position="298"/>
    </location>
</feature>
<feature type="binding site" evidence="1">
    <location>
        <position position="9"/>
    </location>
    <ligand>
        <name>Mg(2+)</name>
        <dbReference type="ChEBI" id="CHEBI:18420"/>
        <note>catalytic</note>
    </ligand>
</feature>
<feature type="binding site" evidence="1">
    <location>
        <position position="82"/>
    </location>
    <ligand>
        <name>Mg(2+)</name>
        <dbReference type="ChEBI" id="CHEBI:18420"/>
        <note>catalytic</note>
    </ligand>
</feature>
<feature type="site" description="Interaction with DNA" evidence="1">
    <location>
        <position position="33"/>
    </location>
</feature>
<feature type="site" description="Interaction with DNA" evidence="1">
    <location>
        <position position="139"/>
    </location>
</feature>
<feature type="site" description="Interaction with DNA" evidence="1">
    <location>
        <position position="140"/>
    </location>
</feature>
<feature type="site" description="Interaction with DNA" evidence="1">
    <location>
        <position position="143"/>
    </location>
</feature>
<feature type="site" description="Interaction with DNA" evidence="1">
    <location>
        <position position="148"/>
    </location>
</feature>
<feature type="site" description="Interaction with DNA" evidence="1">
    <location>
        <position position="155"/>
    </location>
</feature>
<feature type="site" description="Interaction with DNA" evidence="1">
    <location>
        <position position="300"/>
    </location>
</feature>
<feature type="site" description="Interaction with DNA" evidence="1">
    <location>
        <position position="488"/>
    </location>
</feature>